<proteinExistence type="inferred from homology"/>
<name>NAHB_PSEPU</name>
<organism>
    <name type="scientific">Pseudomonas putida</name>
    <name type="common">Arthrobacter siderocapsulatus</name>
    <dbReference type="NCBI Taxonomy" id="303"/>
    <lineage>
        <taxon>Bacteria</taxon>
        <taxon>Pseudomonadati</taxon>
        <taxon>Pseudomonadota</taxon>
        <taxon>Gammaproteobacteria</taxon>
        <taxon>Pseudomonadales</taxon>
        <taxon>Pseudomonadaceae</taxon>
        <taxon>Pseudomonas</taxon>
    </lineage>
</organism>
<protein>
    <recommendedName>
        <fullName>1,2-dihydroxy-1,2-dihydronaphthalene dehydrogenase</fullName>
        <ecNumber>1.3.1.29</ecNumber>
    </recommendedName>
    <alternativeName>
        <fullName>Cis-naphthalene dihydrodiol dehydrogenase</fullName>
    </alternativeName>
    <alternativeName>
        <fullName>Dibenzothiophene dihydrodiol dehydrogenase</fullName>
        <ecNumber>1.3.1.60</ecNumber>
    </alternativeName>
</protein>
<comment type="function">
    <text evidence="1">Catalyzes the oxidation of naphthalene dihydrodiol into 1,2-dihydroxynaphthalene.</text>
</comment>
<comment type="catalytic activity">
    <reaction>
        <text>(1R,2S)-1,2-dihydronaphthalene-1,2-diol + NAD(+) = naphthalene-1,2-diol + NADH + H(+)</text>
        <dbReference type="Rhea" id="RHEA:11832"/>
        <dbReference type="ChEBI" id="CHEBI:15378"/>
        <dbReference type="ChEBI" id="CHEBI:17435"/>
        <dbReference type="ChEBI" id="CHEBI:44343"/>
        <dbReference type="ChEBI" id="CHEBI:57540"/>
        <dbReference type="ChEBI" id="CHEBI:57945"/>
        <dbReference type="EC" id="1.3.1.29"/>
    </reaction>
</comment>
<comment type="catalytic activity">
    <reaction>
        <text>cis-1,2-dihydroxy-1,2-dihydrodibenzothiophene + NAD(+) = 1,2-dihydroxydibenzothiophene + NADH + H(+)</text>
        <dbReference type="Rhea" id="RHEA:24188"/>
        <dbReference type="ChEBI" id="CHEBI:15378"/>
        <dbReference type="ChEBI" id="CHEBI:16941"/>
        <dbReference type="ChEBI" id="CHEBI:17212"/>
        <dbReference type="ChEBI" id="CHEBI:57540"/>
        <dbReference type="ChEBI" id="CHEBI:57945"/>
        <dbReference type="EC" id="1.3.1.60"/>
    </reaction>
</comment>
<comment type="pathway">
    <text>Aromatic compound metabolism; naphthalene degradation.</text>
</comment>
<comment type="similarity">
    <text evidence="2">Belongs to the short-chain dehydrogenases/reductases (SDR) family.</text>
</comment>
<feature type="chain" id="PRO_0000054730" description="1,2-dihydroxy-1,2-dihydronaphthalene dehydrogenase">
    <location>
        <begin position="1"/>
        <end position="259"/>
    </location>
</feature>
<feature type="active site" description="Proton acceptor" evidence="1">
    <location>
        <position position="153"/>
    </location>
</feature>
<feature type="binding site" evidence="1">
    <location>
        <begin position="8"/>
        <end position="32"/>
    </location>
    <ligand>
        <name>NAD(+)</name>
        <dbReference type="ChEBI" id="CHEBI:57540"/>
    </ligand>
</feature>
<feature type="binding site" evidence="1">
    <location>
        <position position="140"/>
    </location>
    <ligand>
        <name>substrate</name>
    </ligand>
</feature>
<accession>P0A169</accession>
<accession>O33462</accession>
<accession>Q52459</accession>
<keyword id="KW-0058">Aromatic hydrocarbons catabolism</keyword>
<keyword id="KW-0520">NAD</keyword>
<keyword id="KW-0560">Oxidoreductase</keyword>
<keyword id="KW-0614">Plasmid</keyword>
<geneLocation type="plasmid">
    <name>NPL1</name>
</geneLocation>
<sequence>MGNQQVVSITGAGSGIGLELVRSFKSAGYYVSALVRNEEQEALLCKEFKDALEIVVGDVRDHATNEKLIKQTIDRFGHLDCFIANAGIWDYMLSIEEPWEKISSSFDEIFDINVKSYFSGISAALPELKKTNGSVVMTASVSSHAVGGGGSCYIASKHAVLGMVKALAYELAPEVRVNAVSPGGTVTSLCGSASAGFDKMHMKDMPGIDDMIKGLTPLGFAAKPEDVVAPYLLLASRKQGKFITGTVISIDGGMALGRK</sequence>
<reference key="1">
    <citation type="submission" date="1997-07" db="EMBL/GenBank/DDBJ databases">
        <title>Nucleotide sequences of genes encoding an upper pathway of naphthalene metabolism of NPL1 plasmid from Pseudomonas putida strain BS202.</title>
        <authorList>
            <person name="Bezborodnikov S.G."/>
            <person name="Boronin A.M."/>
            <person name="Tiedje J.M."/>
        </authorList>
    </citation>
    <scope>NUCLEOTIDE SEQUENCE [GENOMIC DNA]</scope>
    <source>
        <strain>BS202</strain>
    </source>
</reference>
<dbReference type="EC" id="1.3.1.29"/>
<dbReference type="EC" id="1.3.1.60"/>
<dbReference type="EMBL" id="AF010471">
    <property type="protein sequence ID" value="AAB62709.1"/>
    <property type="molecule type" value="Genomic_DNA"/>
</dbReference>
<dbReference type="RefSeq" id="WP_032489003.1">
    <property type="nucleotide sequence ID" value="NZ_CP059053.1"/>
</dbReference>
<dbReference type="SMR" id="P0A169"/>
<dbReference type="UniPathway" id="UPA00082"/>
<dbReference type="GO" id="GO:0018505">
    <property type="term" value="F:cis-1,2-dihydro-1,2-dihydroxynaphthalene dehydrogenase activity"/>
    <property type="evidence" value="ECO:0007669"/>
    <property type="project" value="UniProtKB-EC"/>
</dbReference>
<dbReference type="GO" id="GO:0018513">
    <property type="term" value="F:dibenzothiophene dihydrodiol dehydrogenase activity"/>
    <property type="evidence" value="ECO:0007669"/>
    <property type="project" value="UniProtKB-EC"/>
</dbReference>
<dbReference type="GO" id="GO:0050664">
    <property type="term" value="F:oxidoreductase activity, acting on NAD(P)H, oxygen as acceptor"/>
    <property type="evidence" value="ECO:0007669"/>
    <property type="project" value="TreeGrafter"/>
</dbReference>
<dbReference type="GO" id="GO:0009056">
    <property type="term" value="P:catabolic process"/>
    <property type="evidence" value="ECO:0007669"/>
    <property type="project" value="UniProtKB-KW"/>
</dbReference>
<dbReference type="CDD" id="cd05348">
    <property type="entry name" value="BphB-like_SDR_c"/>
    <property type="match status" value="1"/>
</dbReference>
<dbReference type="FunFam" id="3.40.50.720:FF:000084">
    <property type="entry name" value="Short-chain dehydrogenase reductase"/>
    <property type="match status" value="1"/>
</dbReference>
<dbReference type="Gene3D" id="3.40.50.720">
    <property type="entry name" value="NAD(P)-binding Rossmann-like Domain"/>
    <property type="match status" value="1"/>
</dbReference>
<dbReference type="InterPro" id="IPR047950">
    <property type="entry name" value="BphB-like_SDR"/>
</dbReference>
<dbReference type="InterPro" id="IPR036291">
    <property type="entry name" value="NAD(P)-bd_dom_sf"/>
</dbReference>
<dbReference type="InterPro" id="IPR002347">
    <property type="entry name" value="SDR_fam"/>
</dbReference>
<dbReference type="NCBIfam" id="NF004849">
    <property type="entry name" value="PRK06200.1"/>
    <property type="match status" value="1"/>
</dbReference>
<dbReference type="PANTHER" id="PTHR43008">
    <property type="entry name" value="BENZIL REDUCTASE"/>
    <property type="match status" value="1"/>
</dbReference>
<dbReference type="PANTHER" id="PTHR43008:SF4">
    <property type="entry name" value="CHAIN DEHYDROGENASE, PUTATIVE (AFU_ORTHOLOGUE AFUA_4G08710)-RELATED"/>
    <property type="match status" value="1"/>
</dbReference>
<dbReference type="Pfam" id="PF13561">
    <property type="entry name" value="adh_short_C2"/>
    <property type="match status" value="1"/>
</dbReference>
<dbReference type="PRINTS" id="PR00081">
    <property type="entry name" value="GDHRDH"/>
</dbReference>
<dbReference type="PRINTS" id="PR00080">
    <property type="entry name" value="SDRFAMILY"/>
</dbReference>
<dbReference type="SUPFAM" id="SSF51735">
    <property type="entry name" value="NAD(P)-binding Rossmann-fold domains"/>
    <property type="match status" value="1"/>
</dbReference>
<gene>
    <name type="primary">nahB</name>
</gene>
<evidence type="ECO:0000250" key="1"/>
<evidence type="ECO:0000305" key="2"/>